<organism>
    <name type="scientific">Ralstonia nicotianae (strain ATCC BAA-1114 / GMI1000)</name>
    <name type="common">Ralstonia solanacearum</name>
    <dbReference type="NCBI Taxonomy" id="267608"/>
    <lineage>
        <taxon>Bacteria</taxon>
        <taxon>Pseudomonadati</taxon>
        <taxon>Pseudomonadota</taxon>
        <taxon>Betaproteobacteria</taxon>
        <taxon>Burkholderiales</taxon>
        <taxon>Burkholderiaceae</taxon>
        <taxon>Ralstonia</taxon>
        <taxon>Ralstonia solanacearum species complex</taxon>
    </lineage>
</organism>
<proteinExistence type="inferred from homology"/>
<keyword id="KW-0378">Hydrolase</keyword>
<keyword id="KW-0408">Iron</keyword>
<keyword id="KW-0479">Metal-binding</keyword>
<keyword id="KW-0648">Protein biosynthesis</keyword>
<keyword id="KW-1185">Reference proteome</keyword>
<evidence type="ECO:0000255" key="1">
    <source>
        <dbReference type="HAMAP-Rule" id="MF_00163"/>
    </source>
</evidence>
<protein>
    <recommendedName>
        <fullName evidence="1">Peptide deformylase 2</fullName>
        <shortName evidence="1">PDF 2</shortName>
        <ecNumber evidence="1">3.5.1.88</ecNumber>
    </recommendedName>
    <alternativeName>
        <fullName evidence="1">Polypeptide deformylase 2</fullName>
    </alternativeName>
</protein>
<gene>
    <name evidence="1" type="primary">def2</name>
    <name type="ordered locus">RSc1399</name>
    <name type="ORF">RS05293</name>
</gene>
<reference key="1">
    <citation type="journal article" date="2002" name="Nature">
        <title>Genome sequence of the plant pathogen Ralstonia solanacearum.</title>
        <authorList>
            <person name="Salanoubat M."/>
            <person name="Genin S."/>
            <person name="Artiguenave F."/>
            <person name="Gouzy J."/>
            <person name="Mangenot S."/>
            <person name="Arlat M."/>
            <person name="Billault A."/>
            <person name="Brottier P."/>
            <person name="Camus J.-C."/>
            <person name="Cattolico L."/>
            <person name="Chandler M."/>
            <person name="Choisne N."/>
            <person name="Claudel-Renard C."/>
            <person name="Cunnac S."/>
            <person name="Demange N."/>
            <person name="Gaspin C."/>
            <person name="Lavie M."/>
            <person name="Moisan A."/>
            <person name="Robert C."/>
            <person name="Saurin W."/>
            <person name="Schiex T."/>
            <person name="Siguier P."/>
            <person name="Thebault P."/>
            <person name="Whalen M."/>
            <person name="Wincker P."/>
            <person name="Levy M."/>
            <person name="Weissenbach J."/>
            <person name="Boucher C.A."/>
        </authorList>
    </citation>
    <scope>NUCLEOTIDE SEQUENCE [LARGE SCALE GENOMIC DNA]</scope>
    <source>
        <strain>ATCC BAA-1114 / GMI1000</strain>
    </source>
</reference>
<dbReference type="EC" id="3.5.1.88" evidence="1"/>
<dbReference type="EMBL" id="AL646052">
    <property type="protein sequence ID" value="CAD15101.1"/>
    <property type="molecule type" value="Genomic_DNA"/>
</dbReference>
<dbReference type="SMR" id="Q8XZJ6"/>
<dbReference type="STRING" id="267608.RSc1399"/>
<dbReference type="EnsemblBacteria" id="CAD15101">
    <property type="protein sequence ID" value="CAD15101"/>
    <property type="gene ID" value="RSc1399"/>
</dbReference>
<dbReference type="KEGG" id="rso:RSc1399"/>
<dbReference type="eggNOG" id="COG0242">
    <property type="taxonomic scope" value="Bacteria"/>
</dbReference>
<dbReference type="HOGENOM" id="CLU_061901_5_2_4"/>
<dbReference type="Proteomes" id="UP000001436">
    <property type="component" value="Chromosome"/>
</dbReference>
<dbReference type="GO" id="GO:0046872">
    <property type="term" value="F:metal ion binding"/>
    <property type="evidence" value="ECO:0007669"/>
    <property type="project" value="UniProtKB-KW"/>
</dbReference>
<dbReference type="GO" id="GO:0042586">
    <property type="term" value="F:peptide deformylase activity"/>
    <property type="evidence" value="ECO:0007669"/>
    <property type="project" value="UniProtKB-UniRule"/>
</dbReference>
<dbReference type="GO" id="GO:0043686">
    <property type="term" value="P:co-translational protein modification"/>
    <property type="evidence" value="ECO:0007669"/>
    <property type="project" value="TreeGrafter"/>
</dbReference>
<dbReference type="GO" id="GO:0006412">
    <property type="term" value="P:translation"/>
    <property type="evidence" value="ECO:0007669"/>
    <property type="project" value="UniProtKB-UniRule"/>
</dbReference>
<dbReference type="CDD" id="cd00487">
    <property type="entry name" value="Pep_deformylase"/>
    <property type="match status" value="1"/>
</dbReference>
<dbReference type="FunFam" id="3.90.45.10:FF:000003">
    <property type="entry name" value="Peptide deformylase"/>
    <property type="match status" value="1"/>
</dbReference>
<dbReference type="Gene3D" id="3.90.45.10">
    <property type="entry name" value="Peptide deformylase"/>
    <property type="match status" value="1"/>
</dbReference>
<dbReference type="HAMAP" id="MF_00163">
    <property type="entry name" value="Pep_deformylase"/>
    <property type="match status" value="1"/>
</dbReference>
<dbReference type="InterPro" id="IPR023635">
    <property type="entry name" value="Peptide_deformylase"/>
</dbReference>
<dbReference type="InterPro" id="IPR036821">
    <property type="entry name" value="Peptide_deformylase_sf"/>
</dbReference>
<dbReference type="NCBIfam" id="TIGR00079">
    <property type="entry name" value="pept_deformyl"/>
    <property type="match status" value="1"/>
</dbReference>
<dbReference type="NCBIfam" id="NF001159">
    <property type="entry name" value="PRK00150.1-3"/>
    <property type="match status" value="1"/>
</dbReference>
<dbReference type="PANTHER" id="PTHR10458">
    <property type="entry name" value="PEPTIDE DEFORMYLASE"/>
    <property type="match status" value="1"/>
</dbReference>
<dbReference type="PANTHER" id="PTHR10458:SF20">
    <property type="entry name" value="PEPTIDE DEFORMYLASE 1"/>
    <property type="match status" value="1"/>
</dbReference>
<dbReference type="Pfam" id="PF01327">
    <property type="entry name" value="Pep_deformylase"/>
    <property type="match status" value="1"/>
</dbReference>
<dbReference type="PIRSF" id="PIRSF004749">
    <property type="entry name" value="Pep_def"/>
    <property type="match status" value="1"/>
</dbReference>
<dbReference type="PRINTS" id="PR01576">
    <property type="entry name" value="PDEFORMYLASE"/>
</dbReference>
<dbReference type="SUPFAM" id="SSF56420">
    <property type="entry name" value="Peptide deformylase"/>
    <property type="match status" value="1"/>
</dbReference>
<feature type="chain" id="PRO_0000082825" description="Peptide deformylase 2">
    <location>
        <begin position="1"/>
        <end position="177"/>
    </location>
</feature>
<feature type="active site" evidence="1">
    <location>
        <position position="142"/>
    </location>
</feature>
<feature type="binding site" evidence="1">
    <location>
        <position position="99"/>
    </location>
    <ligand>
        <name>Fe cation</name>
        <dbReference type="ChEBI" id="CHEBI:24875"/>
    </ligand>
</feature>
<feature type="binding site" evidence="1">
    <location>
        <position position="141"/>
    </location>
    <ligand>
        <name>Fe cation</name>
        <dbReference type="ChEBI" id="CHEBI:24875"/>
    </ligand>
</feature>
<feature type="binding site" evidence="1">
    <location>
        <position position="145"/>
    </location>
    <ligand>
        <name>Fe cation</name>
        <dbReference type="ChEBI" id="CHEBI:24875"/>
    </ligand>
</feature>
<sequence length="177" mass="19950">MIRPILKMGDSRLLRVAKPVQRFQTPELTALIEDMFDTMDAARGAGLAAPQIGVDLQVVIFGFDRNDRYPDAPAVPKTVLINPTIEPLSDAMEDGWEGCLSVPGLRGVVPRYTRLRYTGYDQHGHAIDRIAEGFHARVVQHECDHLQGILYPMRVQDFTRFGFTEILFPELPAHHND</sequence>
<accession>Q8XZJ6</accession>
<comment type="function">
    <text evidence="1">Removes the formyl group from the N-terminal Met of newly synthesized proteins. Requires at least a dipeptide for an efficient rate of reaction. N-terminal L-methionine is a prerequisite for activity but the enzyme has broad specificity at other positions.</text>
</comment>
<comment type="catalytic activity">
    <reaction evidence="1">
        <text>N-terminal N-formyl-L-methionyl-[peptide] + H2O = N-terminal L-methionyl-[peptide] + formate</text>
        <dbReference type="Rhea" id="RHEA:24420"/>
        <dbReference type="Rhea" id="RHEA-COMP:10639"/>
        <dbReference type="Rhea" id="RHEA-COMP:10640"/>
        <dbReference type="ChEBI" id="CHEBI:15377"/>
        <dbReference type="ChEBI" id="CHEBI:15740"/>
        <dbReference type="ChEBI" id="CHEBI:49298"/>
        <dbReference type="ChEBI" id="CHEBI:64731"/>
        <dbReference type="EC" id="3.5.1.88"/>
    </reaction>
</comment>
<comment type="cofactor">
    <cofactor evidence="1">
        <name>Fe(2+)</name>
        <dbReference type="ChEBI" id="CHEBI:29033"/>
    </cofactor>
    <text evidence="1">Binds 1 Fe(2+) ion.</text>
</comment>
<comment type="similarity">
    <text evidence="1">Belongs to the polypeptide deformylase family.</text>
</comment>
<name>DEF2_RALN1</name>